<keyword id="KW-0460">Magnesium</keyword>
<keyword id="KW-0479">Metal-binding</keyword>
<keyword id="KW-0784">Thiamine biosynthesis</keyword>
<keyword id="KW-0808">Transferase</keyword>
<proteinExistence type="inferred from homology"/>
<comment type="function">
    <text evidence="1">Condenses 4-methyl-5-(beta-hydroxyethyl)thiazole monophosphate (THZ-P) and 2-methyl-4-amino-5-hydroxymethyl pyrimidine pyrophosphate (HMP-PP) to form thiamine monophosphate (TMP).</text>
</comment>
<comment type="catalytic activity">
    <reaction evidence="1">
        <text>2-[(2R,5Z)-2-carboxy-4-methylthiazol-5(2H)-ylidene]ethyl phosphate + 4-amino-2-methyl-5-(diphosphooxymethyl)pyrimidine + 2 H(+) = thiamine phosphate + CO2 + diphosphate</text>
        <dbReference type="Rhea" id="RHEA:47844"/>
        <dbReference type="ChEBI" id="CHEBI:15378"/>
        <dbReference type="ChEBI" id="CHEBI:16526"/>
        <dbReference type="ChEBI" id="CHEBI:33019"/>
        <dbReference type="ChEBI" id="CHEBI:37575"/>
        <dbReference type="ChEBI" id="CHEBI:57841"/>
        <dbReference type="ChEBI" id="CHEBI:62899"/>
        <dbReference type="EC" id="2.5.1.3"/>
    </reaction>
</comment>
<comment type="catalytic activity">
    <reaction evidence="1">
        <text>2-(2-carboxy-4-methylthiazol-5-yl)ethyl phosphate + 4-amino-2-methyl-5-(diphosphooxymethyl)pyrimidine + 2 H(+) = thiamine phosphate + CO2 + diphosphate</text>
        <dbReference type="Rhea" id="RHEA:47848"/>
        <dbReference type="ChEBI" id="CHEBI:15378"/>
        <dbReference type="ChEBI" id="CHEBI:16526"/>
        <dbReference type="ChEBI" id="CHEBI:33019"/>
        <dbReference type="ChEBI" id="CHEBI:37575"/>
        <dbReference type="ChEBI" id="CHEBI:57841"/>
        <dbReference type="ChEBI" id="CHEBI:62890"/>
        <dbReference type="EC" id="2.5.1.3"/>
    </reaction>
</comment>
<comment type="catalytic activity">
    <reaction evidence="1">
        <text>4-methyl-5-(2-phosphooxyethyl)-thiazole + 4-amino-2-methyl-5-(diphosphooxymethyl)pyrimidine + H(+) = thiamine phosphate + diphosphate</text>
        <dbReference type="Rhea" id="RHEA:22328"/>
        <dbReference type="ChEBI" id="CHEBI:15378"/>
        <dbReference type="ChEBI" id="CHEBI:33019"/>
        <dbReference type="ChEBI" id="CHEBI:37575"/>
        <dbReference type="ChEBI" id="CHEBI:57841"/>
        <dbReference type="ChEBI" id="CHEBI:58296"/>
        <dbReference type="EC" id="2.5.1.3"/>
    </reaction>
</comment>
<comment type="cofactor">
    <cofactor evidence="1">
        <name>Mg(2+)</name>
        <dbReference type="ChEBI" id="CHEBI:18420"/>
    </cofactor>
    <text evidence="1">Binds 1 Mg(2+) ion per subunit.</text>
</comment>
<comment type="pathway">
    <text evidence="1">Cofactor biosynthesis; thiamine diphosphate biosynthesis; thiamine phosphate from 4-amino-2-methyl-5-diphosphomethylpyrimidine and 4-methyl-5-(2-phosphoethyl)-thiazole: step 1/1.</text>
</comment>
<comment type="similarity">
    <text evidence="1">Belongs to the thiamine-phosphate synthase family.</text>
</comment>
<gene>
    <name evidence="1" type="primary">thiE</name>
    <name type="ordered locus">CLI_0534</name>
</gene>
<sequence length="205" mass="22407">MEINYELYLITDRRFLKGRQLKKVVEDAILGGVTIVQVREKDVSTREFYNVAKEVKEVTDYYKVPIIINDRLDIAQAIDASGVHLGQKDMHLNIAREILGKDKIIGISVGNVKEALEAQNNGADYLGIGTIFPTGSKKDVDAIIGIDGLSKIKDSISIPSVAIGGINKTNFKDVLKTGIEGISVISAILDEDDIKLAANNLLINK</sequence>
<organism>
    <name type="scientific">Clostridium botulinum (strain Langeland / NCTC 10281 / Type F)</name>
    <dbReference type="NCBI Taxonomy" id="441772"/>
    <lineage>
        <taxon>Bacteria</taxon>
        <taxon>Bacillati</taxon>
        <taxon>Bacillota</taxon>
        <taxon>Clostridia</taxon>
        <taxon>Eubacteriales</taxon>
        <taxon>Clostridiaceae</taxon>
        <taxon>Clostridium</taxon>
    </lineage>
</organism>
<evidence type="ECO:0000255" key="1">
    <source>
        <dbReference type="HAMAP-Rule" id="MF_00097"/>
    </source>
</evidence>
<feature type="chain" id="PRO_0000336383" description="Thiamine-phosphate synthase">
    <location>
        <begin position="1"/>
        <end position="205"/>
    </location>
</feature>
<feature type="binding site" evidence="1">
    <location>
        <begin position="37"/>
        <end position="41"/>
    </location>
    <ligand>
        <name>4-amino-2-methyl-5-(diphosphooxymethyl)pyrimidine</name>
        <dbReference type="ChEBI" id="CHEBI:57841"/>
    </ligand>
</feature>
<feature type="binding site" evidence="1">
    <location>
        <position position="69"/>
    </location>
    <ligand>
        <name>4-amino-2-methyl-5-(diphosphooxymethyl)pyrimidine</name>
        <dbReference type="ChEBI" id="CHEBI:57841"/>
    </ligand>
</feature>
<feature type="binding site" evidence="1">
    <location>
        <position position="70"/>
    </location>
    <ligand>
        <name>Mg(2+)</name>
        <dbReference type="ChEBI" id="CHEBI:18420"/>
    </ligand>
</feature>
<feature type="binding site" evidence="1">
    <location>
        <position position="89"/>
    </location>
    <ligand>
        <name>Mg(2+)</name>
        <dbReference type="ChEBI" id="CHEBI:18420"/>
    </ligand>
</feature>
<feature type="binding site" evidence="1">
    <location>
        <position position="108"/>
    </location>
    <ligand>
        <name>4-amino-2-methyl-5-(diphosphooxymethyl)pyrimidine</name>
        <dbReference type="ChEBI" id="CHEBI:57841"/>
    </ligand>
</feature>
<feature type="binding site" evidence="1">
    <location>
        <begin position="134"/>
        <end position="136"/>
    </location>
    <ligand>
        <name>2-[(2R,5Z)-2-carboxy-4-methylthiazol-5(2H)-ylidene]ethyl phosphate</name>
        <dbReference type="ChEBI" id="CHEBI:62899"/>
    </ligand>
</feature>
<feature type="binding site" evidence="1">
    <location>
        <position position="137"/>
    </location>
    <ligand>
        <name>4-amino-2-methyl-5-(diphosphooxymethyl)pyrimidine</name>
        <dbReference type="ChEBI" id="CHEBI:57841"/>
    </ligand>
</feature>
<feature type="binding site" evidence="1">
    <location>
        <position position="165"/>
    </location>
    <ligand>
        <name>2-[(2R,5Z)-2-carboxy-4-methylthiazol-5(2H)-ylidene]ethyl phosphate</name>
        <dbReference type="ChEBI" id="CHEBI:62899"/>
    </ligand>
</feature>
<feature type="binding site" evidence="1">
    <location>
        <begin position="185"/>
        <end position="186"/>
    </location>
    <ligand>
        <name>2-[(2R,5Z)-2-carboxy-4-methylthiazol-5(2H)-ylidene]ethyl phosphate</name>
        <dbReference type="ChEBI" id="CHEBI:62899"/>
    </ligand>
</feature>
<name>THIE_CLOBL</name>
<protein>
    <recommendedName>
        <fullName evidence="1">Thiamine-phosphate synthase</fullName>
        <shortName evidence="1">TP synthase</shortName>
        <shortName evidence="1">TPS</shortName>
        <ecNumber evidence="1">2.5.1.3</ecNumber>
    </recommendedName>
    <alternativeName>
        <fullName evidence="1">Thiamine-phosphate pyrophosphorylase</fullName>
        <shortName evidence="1">TMP pyrophosphorylase</shortName>
        <shortName evidence="1">TMP-PPase</shortName>
    </alternativeName>
</protein>
<accession>A7GAL0</accession>
<dbReference type="EC" id="2.5.1.3" evidence="1"/>
<dbReference type="EMBL" id="CP000728">
    <property type="protein sequence ID" value="ABS42158.1"/>
    <property type="molecule type" value="Genomic_DNA"/>
</dbReference>
<dbReference type="RefSeq" id="WP_003389381.1">
    <property type="nucleotide sequence ID" value="NC_009699.1"/>
</dbReference>
<dbReference type="SMR" id="A7GAL0"/>
<dbReference type="KEGG" id="cbf:CLI_0534"/>
<dbReference type="HOGENOM" id="CLU_018272_3_2_9"/>
<dbReference type="UniPathway" id="UPA00060">
    <property type="reaction ID" value="UER00141"/>
</dbReference>
<dbReference type="Proteomes" id="UP000002410">
    <property type="component" value="Chromosome"/>
</dbReference>
<dbReference type="GO" id="GO:0005737">
    <property type="term" value="C:cytoplasm"/>
    <property type="evidence" value="ECO:0007669"/>
    <property type="project" value="TreeGrafter"/>
</dbReference>
<dbReference type="GO" id="GO:0000287">
    <property type="term" value="F:magnesium ion binding"/>
    <property type="evidence" value="ECO:0007669"/>
    <property type="project" value="UniProtKB-UniRule"/>
</dbReference>
<dbReference type="GO" id="GO:0004789">
    <property type="term" value="F:thiamine-phosphate diphosphorylase activity"/>
    <property type="evidence" value="ECO:0007669"/>
    <property type="project" value="UniProtKB-UniRule"/>
</dbReference>
<dbReference type="GO" id="GO:0009228">
    <property type="term" value="P:thiamine biosynthetic process"/>
    <property type="evidence" value="ECO:0007669"/>
    <property type="project" value="UniProtKB-KW"/>
</dbReference>
<dbReference type="GO" id="GO:0009229">
    <property type="term" value="P:thiamine diphosphate biosynthetic process"/>
    <property type="evidence" value="ECO:0007669"/>
    <property type="project" value="UniProtKB-UniRule"/>
</dbReference>
<dbReference type="CDD" id="cd00564">
    <property type="entry name" value="TMP_TenI"/>
    <property type="match status" value="1"/>
</dbReference>
<dbReference type="FunFam" id="3.20.20.70:FF:000282">
    <property type="entry name" value="Thiamine-phosphate synthase"/>
    <property type="match status" value="1"/>
</dbReference>
<dbReference type="Gene3D" id="3.20.20.70">
    <property type="entry name" value="Aldolase class I"/>
    <property type="match status" value="1"/>
</dbReference>
<dbReference type="HAMAP" id="MF_00097">
    <property type="entry name" value="TMP_synthase"/>
    <property type="match status" value="1"/>
</dbReference>
<dbReference type="InterPro" id="IPR013785">
    <property type="entry name" value="Aldolase_TIM"/>
</dbReference>
<dbReference type="InterPro" id="IPR036206">
    <property type="entry name" value="ThiamineP_synth_sf"/>
</dbReference>
<dbReference type="InterPro" id="IPR022998">
    <property type="entry name" value="ThiamineP_synth_TenI"/>
</dbReference>
<dbReference type="InterPro" id="IPR034291">
    <property type="entry name" value="TMP_synthase"/>
</dbReference>
<dbReference type="NCBIfam" id="TIGR00693">
    <property type="entry name" value="thiE"/>
    <property type="match status" value="1"/>
</dbReference>
<dbReference type="PANTHER" id="PTHR20857:SF23">
    <property type="entry name" value="THIAMINE BIOSYNTHETIC BIFUNCTIONAL ENZYME"/>
    <property type="match status" value="1"/>
</dbReference>
<dbReference type="PANTHER" id="PTHR20857">
    <property type="entry name" value="THIAMINE-PHOSPHATE PYROPHOSPHORYLASE"/>
    <property type="match status" value="1"/>
</dbReference>
<dbReference type="Pfam" id="PF02581">
    <property type="entry name" value="TMP-TENI"/>
    <property type="match status" value="1"/>
</dbReference>
<dbReference type="SUPFAM" id="SSF51391">
    <property type="entry name" value="Thiamin phosphate synthase"/>
    <property type="match status" value="1"/>
</dbReference>
<reference key="1">
    <citation type="submission" date="2007-06" db="EMBL/GenBank/DDBJ databases">
        <authorList>
            <person name="Brinkac L.M."/>
            <person name="Daugherty S."/>
            <person name="Dodson R.J."/>
            <person name="Madupu R."/>
            <person name="Brown J.L."/>
            <person name="Bruce D."/>
            <person name="Detter C."/>
            <person name="Munk C."/>
            <person name="Smith L.A."/>
            <person name="Smith T.J."/>
            <person name="White O."/>
            <person name="Brettin T.S."/>
        </authorList>
    </citation>
    <scope>NUCLEOTIDE SEQUENCE [LARGE SCALE GENOMIC DNA]</scope>
    <source>
        <strain>Langeland / NCTC 10281 / Type F</strain>
    </source>
</reference>